<accession>A7HZC0</accession>
<name>DUT_PARL1</name>
<dbReference type="EC" id="3.6.1.23" evidence="1"/>
<dbReference type="EMBL" id="CP000774">
    <property type="protein sequence ID" value="ABS65253.1"/>
    <property type="molecule type" value="Genomic_DNA"/>
</dbReference>
<dbReference type="RefSeq" id="WP_012112514.1">
    <property type="nucleotide sequence ID" value="NC_009719.1"/>
</dbReference>
<dbReference type="SMR" id="A7HZC0"/>
<dbReference type="STRING" id="402881.Plav_3655"/>
<dbReference type="KEGG" id="pla:Plav_3655"/>
<dbReference type="eggNOG" id="COG0756">
    <property type="taxonomic scope" value="Bacteria"/>
</dbReference>
<dbReference type="HOGENOM" id="CLU_068508_1_2_5"/>
<dbReference type="OrthoDB" id="9809956at2"/>
<dbReference type="UniPathway" id="UPA00610">
    <property type="reaction ID" value="UER00666"/>
</dbReference>
<dbReference type="Proteomes" id="UP000006377">
    <property type="component" value="Chromosome"/>
</dbReference>
<dbReference type="GO" id="GO:0004170">
    <property type="term" value="F:dUTP diphosphatase activity"/>
    <property type="evidence" value="ECO:0007669"/>
    <property type="project" value="UniProtKB-UniRule"/>
</dbReference>
<dbReference type="GO" id="GO:0000287">
    <property type="term" value="F:magnesium ion binding"/>
    <property type="evidence" value="ECO:0007669"/>
    <property type="project" value="UniProtKB-UniRule"/>
</dbReference>
<dbReference type="GO" id="GO:0006226">
    <property type="term" value="P:dUMP biosynthetic process"/>
    <property type="evidence" value="ECO:0007669"/>
    <property type="project" value="UniProtKB-UniRule"/>
</dbReference>
<dbReference type="GO" id="GO:0046081">
    <property type="term" value="P:dUTP catabolic process"/>
    <property type="evidence" value="ECO:0007669"/>
    <property type="project" value="InterPro"/>
</dbReference>
<dbReference type="CDD" id="cd07557">
    <property type="entry name" value="trimeric_dUTPase"/>
    <property type="match status" value="1"/>
</dbReference>
<dbReference type="FunFam" id="2.70.40.10:FF:000002">
    <property type="entry name" value="dUTP diphosphatase"/>
    <property type="match status" value="1"/>
</dbReference>
<dbReference type="Gene3D" id="2.70.40.10">
    <property type="match status" value="1"/>
</dbReference>
<dbReference type="HAMAP" id="MF_00116">
    <property type="entry name" value="dUTPase_bact"/>
    <property type="match status" value="1"/>
</dbReference>
<dbReference type="InterPro" id="IPR008181">
    <property type="entry name" value="dUTPase"/>
</dbReference>
<dbReference type="InterPro" id="IPR029054">
    <property type="entry name" value="dUTPase-like"/>
</dbReference>
<dbReference type="InterPro" id="IPR036157">
    <property type="entry name" value="dUTPase-like_sf"/>
</dbReference>
<dbReference type="InterPro" id="IPR033704">
    <property type="entry name" value="dUTPase_trimeric"/>
</dbReference>
<dbReference type="NCBIfam" id="TIGR00576">
    <property type="entry name" value="dut"/>
    <property type="match status" value="1"/>
</dbReference>
<dbReference type="NCBIfam" id="NF001862">
    <property type="entry name" value="PRK00601.1"/>
    <property type="match status" value="1"/>
</dbReference>
<dbReference type="PANTHER" id="PTHR11241">
    <property type="entry name" value="DEOXYURIDINE 5'-TRIPHOSPHATE NUCLEOTIDOHYDROLASE"/>
    <property type="match status" value="1"/>
</dbReference>
<dbReference type="PANTHER" id="PTHR11241:SF0">
    <property type="entry name" value="DEOXYURIDINE 5'-TRIPHOSPHATE NUCLEOTIDOHYDROLASE"/>
    <property type="match status" value="1"/>
</dbReference>
<dbReference type="Pfam" id="PF00692">
    <property type="entry name" value="dUTPase"/>
    <property type="match status" value="1"/>
</dbReference>
<dbReference type="SUPFAM" id="SSF51283">
    <property type="entry name" value="dUTPase-like"/>
    <property type="match status" value="1"/>
</dbReference>
<comment type="function">
    <text evidence="1">This enzyme is involved in nucleotide metabolism: it produces dUMP, the immediate precursor of thymidine nucleotides and it decreases the intracellular concentration of dUTP so that uracil cannot be incorporated into DNA.</text>
</comment>
<comment type="catalytic activity">
    <reaction evidence="1">
        <text>dUTP + H2O = dUMP + diphosphate + H(+)</text>
        <dbReference type="Rhea" id="RHEA:10248"/>
        <dbReference type="ChEBI" id="CHEBI:15377"/>
        <dbReference type="ChEBI" id="CHEBI:15378"/>
        <dbReference type="ChEBI" id="CHEBI:33019"/>
        <dbReference type="ChEBI" id="CHEBI:61555"/>
        <dbReference type="ChEBI" id="CHEBI:246422"/>
        <dbReference type="EC" id="3.6.1.23"/>
    </reaction>
</comment>
<comment type="cofactor">
    <cofactor evidence="1">
        <name>Mg(2+)</name>
        <dbReference type="ChEBI" id="CHEBI:18420"/>
    </cofactor>
</comment>
<comment type="pathway">
    <text evidence="1">Pyrimidine metabolism; dUMP biosynthesis; dUMP from dCTP (dUTP route): step 2/2.</text>
</comment>
<comment type="similarity">
    <text evidence="1">Belongs to the dUTPase family.</text>
</comment>
<feature type="chain" id="PRO_1000076063" description="Deoxyuridine 5'-triphosphate nucleotidohydrolase">
    <location>
        <begin position="1"/>
        <end position="155"/>
    </location>
</feature>
<feature type="binding site" evidence="1">
    <location>
        <begin position="72"/>
        <end position="74"/>
    </location>
    <ligand>
        <name>substrate</name>
    </ligand>
</feature>
<feature type="binding site" evidence="1">
    <location>
        <position position="85"/>
    </location>
    <ligand>
        <name>substrate</name>
    </ligand>
</feature>
<feature type="binding site" evidence="1">
    <location>
        <begin position="89"/>
        <end position="91"/>
    </location>
    <ligand>
        <name>substrate</name>
    </ligand>
</feature>
<feature type="binding site" evidence="1">
    <location>
        <position position="99"/>
    </location>
    <ligand>
        <name>substrate</name>
    </ligand>
</feature>
<organism>
    <name type="scientific">Parvibaculum lavamentivorans (strain DS-1 / DSM 13023 / NCIMB 13966)</name>
    <dbReference type="NCBI Taxonomy" id="402881"/>
    <lineage>
        <taxon>Bacteria</taxon>
        <taxon>Pseudomonadati</taxon>
        <taxon>Pseudomonadota</taxon>
        <taxon>Alphaproteobacteria</taxon>
        <taxon>Hyphomicrobiales</taxon>
        <taxon>Parvibaculaceae</taxon>
        <taxon>Parvibaculum</taxon>
    </lineage>
</organism>
<reference key="1">
    <citation type="journal article" date="2011" name="Stand. Genomic Sci.">
        <title>Complete genome sequence of Parvibaculum lavamentivorans type strain (DS-1(T)).</title>
        <authorList>
            <person name="Schleheck D."/>
            <person name="Weiss M."/>
            <person name="Pitluck S."/>
            <person name="Bruce D."/>
            <person name="Land M.L."/>
            <person name="Han S."/>
            <person name="Saunders E."/>
            <person name="Tapia R."/>
            <person name="Detter C."/>
            <person name="Brettin T."/>
            <person name="Han J."/>
            <person name="Woyke T."/>
            <person name="Goodwin L."/>
            <person name="Pennacchio L."/>
            <person name="Nolan M."/>
            <person name="Cook A.M."/>
            <person name="Kjelleberg S."/>
            <person name="Thomas T."/>
        </authorList>
    </citation>
    <scope>NUCLEOTIDE SEQUENCE [LARGE SCALE GENOMIC DNA]</scope>
    <source>
        <strain>DS-1 / DSM 13023 / NCIMB 13966</strain>
    </source>
</reference>
<gene>
    <name evidence="1" type="primary">dut</name>
    <name type="ordered locus">Plav_3655</name>
</gene>
<proteinExistence type="inferred from homology"/>
<keyword id="KW-0378">Hydrolase</keyword>
<keyword id="KW-0460">Magnesium</keyword>
<keyword id="KW-0479">Metal-binding</keyword>
<keyword id="KW-0546">Nucleotide metabolism</keyword>
<keyword id="KW-1185">Reference proteome</keyword>
<protein>
    <recommendedName>
        <fullName evidence="1">Deoxyuridine 5'-triphosphate nucleotidohydrolase</fullName>
        <shortName evidence="1">dUTPase</shortName>
        <ecNumber evidence="1">3.6.1.23</ecNumber>
    </recommendedName>
    <alternativeName>
        <fullName evidence="1">dUTP pyrophosphatase</fullName>
    </alternativeName>
</protein>
<sequence length="155" mass="16292">MNPLIDVRVQRLPHSDGLPLPRYETSGAAGMDLIAALPEGEPMVLAPGERAMVPTGLAIALPQGFEAQVRPRSGLAAKNGVTVLNSPGTVDCDYRGEVKVILINHGADAFTIERGTRIAQMVVSPVTQARFEEVETLDETARGAGGFGSTGTKGR</sequence>
<evidence type="ECO:0000255" key="1">
    <source>
        <dbReference type="HAMAP-Rule" id="MF_00116"/>
    </source>
</evidence>